<gene>
    <name type="primary">msl1</name>
    <name type="ORF">pi056</name>
    <name type="ORF">SPBC8D2.09c</name>
</gene>
<name>RU2B_SCHPO</name>
<protein>
    <recommendedName>
        <fullName>Probable U2 small nuclear ribonucleoprotein B''</fullName>
        <shortName>U2 snRNP B''</shortName>
    </recommendedName>
</protein>
<proteinExistence type="evidence at protein level"/>
<reference key="1">
    <citation type="journal article" date="2000" name="Yeast">
        <title>A 38 kb segment containing the cdc2 gene from the left arm of fission yeast chromosome II: sequence analysis and characterization of the genomic DNA and cDNAs encoded on the segment.</title>
        <authorList>
            <person name="Machida M."/>
            <person name="Yamazaki S."/>
            <person name="Kunihiro S."/>
            <person name="Tanaka T."/>
            <person name="Kushida N."/>
            <person name="Jinno K."/>
            <person name="Haikawa Y."/>
            <person name="Yamazaki J."/>
            <person name="Yamamoto S."/>
            <person name="Sekine M."/>
            <person name="Oguchi A."/>
            <person name="Nagai Y."/>
            <person name="Sakai M."/>
            <person name="Aoki K."/>
            <person name="Ogura K."/>
            <person name="Kudoh Y."/>
            <person name="Kikuchi H."/>
            <person name="Zhang M.Q."/>
            <person name="Yanagida M."/>
        </authorList>
    </citation>
    <scope>NUCLEOTIDE SEQUENCE [LARGE SCALE GENOMIC DNA]</scope>
    <source>
        <strain>972 / ATCC 24843</strain>
    </source>
</reference>
<reference key="2">
    <citation type="journal article" date="2002" name="Nature">
        <title>The genome sequence of Schizosaccharomyces pombe.</title>
        <authorList>
            <person name="Wood V."/>
            <person name="Gwilliam R."/>
            <person name="Rajandream M.A."/>
            <person name="Lyne M.H."/>
            <person name="Lyne R."/>
            <person name="Stewart A."/>
            <person name="Sgouros J.G."/>
            <person name="Peat N."/>
            <person name="Hayles J."/>
            <person name="Baker S.G."/>
            <person name="Basham D."/>
            <person name="Bowman S."/>
            <person name="Brooks K."/>
            <person name="Brown D."/>
            <person name="Brown S."/>
            <person name="Chillingworth T."/>
            <person name="Churcher C.M."/>
            <person name="Collins M."/>
            <person name="Connor R."/>
            <person name="Cronin A."/>
            <person name="Davis P."/>
            <person name="Feltwell T."/>
            <person name="Fraser A."/>
            <person name="Gentles S."/>
            <person name="Goble A."/>
            <person name="Hamlin N."/>
            <person name="Harris D.E."/>
            <person name="Hidalgo J."/>
            <person name="Hodgson G."/>
            <person name="Holroyd S."/>
            <person name="Hornsby T."/>
            <person name="Howarth S."/>
            <person name="Huckle E.J."/>
            <person name="Hunt S."/>
            <person name="Jagels K."/>
            <person name="James K.D."/>
            <person name="Jones L."/>
            <person name="Jones M."/>
            <person name="Leather S."/>
            <person name="McDonald S."/>
            <person name="McLean J."/>
            <person name="Mooney P."/>
            <person name="Moule S."/>
            <person name="Mungall K.L."/>
            <person name="Murphy L.D."/>
            <person name="Niblett D."/>
            <person name="Odell C."/>
            <person name="Oliver K."/>
            <person name="O'Neil S."/>
            <person name="Pearson D."/>
            <person name="Quail M.A."/>
            <person name="Rabbinowitsch E."/>
            <person name="Rutherford K.M."/>
            <person name="Rutter S."/>
            <person name="Saunders D."/>
            <person name="Seeger K."/>
            <person name="Sharp S."/>
            <person name="Skelton J."/>
            <person name="Simmonds M.N."/>
            <person name="Squares R."/>
            <person name="Squares S."/>
            <person name="Stevens K."/>
            <person name="Taylor K."/>
            <person name="Taylor R.G."/>
            <person name="Tivey A."/>
            <person name="Walsh S.V."/>
            <person name="Warren T."/>
            <person name="Whitehead S."/>
            <person name="Woodward J.R."/>
            <person name="Volckaert G."/>
            <person name="Aert R."/>
            <person name="Robben J."/>
            <person name="Grymonprez B."/>
            <person name="Weltjens I."/>
            <person name="Vanstreels E."/>
            <person name="Rieger M."/>
            <person name="Schaefer M."/>
            <person name="Mueller-Auer S."/>
            <person name="Gabel C."/>
            <person name="Fuchs M."/>
            <person name="Duesterhoeft A."/>
            <person name="Fritzc C."/>
            <person name="Holzer E."/>
            <person name="Moestl D."/>
            <person name="Hilbert H."/>
            <person name="Borzym K."/>
            <person name="Langer I."/>
            <person name="Beck A."/>
            <person name="Lehrach H."/>
            <person name="Reinhardt R."/>
            <person name="Pohl T.M."/>
            <person name="Eger P."/>
            <person name="Zimmermann W."/>
            <person name="Wedler H."/>
            <person name="Wambutt R."/>
            <person name="Purnelle B."/>
            <person name="Goffeau A."/>
            <person name="Cadieu E."/>
            <person name="Dreano S."/>
            <person name="Gloux S."/>
            <person name="Lelaure V."/>
            <person name="Mottier S."/>
            <person name="Galibert F."/>
            <person name="Aves S.J."/>
            <person name="Xiang Z."/>
            <person name="Hunt C."/>
            <person name="Moore K."/>
            <person name="Hurst S.M."/>
            <person name="Lucas M."/>
            <person name="Rochet M."/>
            <person name="Gaillardin C."/>
            <person name="Tallada V.A."/>
            <person name="Garzon A."/>
            <person name="Thode G."/>
            <person name="Daga R.R."/>
            <person name="Cruzado L."/>
            <person name="Jimenez J."/>
            <person name="Sanchez M."/>
            <person name="del Rey F."/>
            <person name="Benito J."/>
            <person name="Dominguez A."/>
            <person name="Revuelta J.L."/>
            <person name="Moreno S."/>
            <person name="Armstrong J."/>
            <person name="Forsburg S.L."/>
            <person name="Cerutti L."/>
            <person name="Lowe T."/>
            <person name="McCombie W.R."/>
            <person name="Paulsen I."/>
            <person name="Potashkin J."/>
            <person name="Shpakovski G.V."/>
            <person name="Ussery D."/>
            <person name="Barrell B.G."/>
            <person name="Nurse P."/>
        </authorList>
    </citation>
    <scope>NUCLEOTIDE SEQUENCE [LARGE SCALE GENOMIC DNA]</scope>
    <source>
        <strain>972 / ATCC 24843</strain>
    </source>
</reference>
<reference key="3">
    <citation type="journal article" date="2002" name="Mol. Cell. Biol.">
        <title>Proteomics analysis reveals stable multiprotein complexes in both fission and budding yeasts containing Myb-related Cdc5p/Cef1p, novel pre-mRNA splicing factors, and snRNAs.</title>
        <authorList>
            <person name="Ohi M.D."/>
            <person name="Link A.J."/>
            <person name="Ren L."/>
            <person name="Jennings J.L."/>
            <person name="McDonald W.H."/>
            <person name="Gould K.L."/>
        </authorList>
    </citation>
    <scope>IDENTIFICATION IN THE CWF COMPLEX</scope>
    <scope>IDENTIFICATION BY MASS SPECTROMETRY</scope>
</reference>
<feature type="chain" id="PRO_0000081894" description="Probable U2 small nuclear ribonucleoprotein B''">
    <location>
        <begin position="1"/>
        <end position="111"/>
    </location>
</feature>
<feature type="domain" description="RRM" evidence="2">
    <location>
        <begin position="4"/>
        <end position="83"/>
    </location>
</feature>
<organism>
    <name type="scientific">Schizosaccharomyces pombe (strain 972 / ATCC 24843)</name>
    <name type="common">Fission yeast</name>
    <dbReference type="NCBI Taxonomy" id="284812"/>
    <lineage>
        <taxon>Eukaryota</taxon>
        <taxon>Fungi</taxon>
        <taxon>Dikarya</taxon>
        <taxon>Ascomycota</taxon>
        <taxon>Taphrinomycotina</taxon>
        <taxon>Schizosaccharomycetes</taxon>
        <taxon>Schizosaccharomycetales</taxon>
        <taxon>Schizosaccharomycetaceae</taxon>
        <taxon>Schizosaccharomyces</taxon>
    </lineage>
</organism>
<dbReference type="EMBL" id="AB004538">
    <property type="protein sequence ID" value="BAA21437.1"/>
    <property type="status" value="ALT_SEQ"/>
    <property type="molecule type" value="Genomic_DNA"/>
</dbReference>
<dbReference type="EMBL" id="CU329671">
    <property type="protein sequence ID" value="CAA17824.1"/>
    <property type="molecule type" value="Genomic_DNA"/>
</dbReference>
<dbReference type="PIR" id="T40754">
    <property type="entry name" value="T40754"/>
</dbReference>
<dbReference type="RefSeq" id="NP_595571.1">
    <property type="nucleotide sequence ID" value="NM_001021466.2"/>
</dbReference>
<dbReference type="PDB" id="3JB9">
    <property type="method" value="EM"/>
    <property type="resolution" value="3.60 A"/>
    <property type="chains" value="k=1-111"/>
</dbReference>
<dbReference type="PDBsum" id="3JB9"/>
<dbReference type="SMR" id="Q7LL14"/>
<dbReference type="BioGRID" id="277733">
    <property type="interactions" value="19"/>
</dbReference>
<dbReference type="FunCoup" id="Q7LL14">
    <property type="interactions" value="144"/>
</dbReference>
<dbReference type="IntAct" id="Q7LL14">
    <property type="interactions" value="1"/>
</dbReference>
<dbReference type="STRING" id="284812.Q7LL14"/>
<dbReference type="iPTMnet" id="Q7LL14"/>
<dbReference type="PaxDb" id="4896-SPBC8D2.09c.1"/>
<dbReference type="EnsemblFungi" id="SPBC8D2.09c.1">
    <property type="protein sequence ID" value="SPBC8D2.09c.1:pep"/>
    <property type="gene ID" value="SPBC8D2.09c"/>
</dbReference>
<dbReference type="GeneID" id="2541219"/>
<dbReference type="KEGG" id="spo:2541219"/>
<dbReference type="PomBase" id="SPBC8D2.09c">
    <property type="gene designation" value="msl1"/>
</dbReference>
<dbReference type="VEuPathDB" id="FungiDB:SPBC8D2.09c"/>
<dbReference type="eggNOG" id="KOG4206">
    <property type="taxonomic scope" value="Eukaryota"/>
</dbReference>
<dbReference type="HOGENOM" id="CLU_041869_2_1_1"/>
<dbReference type="InParanoid" id="Q7LL14"/>
<dbReference type="OMA" id="HIVFYDA"/>
<dbReference type="PhylomeDB" id="Q7LL14"/>
<dbReference type="EvolutionaryTrace" id="Q7LL14"/>
<dbReference type="PRO" id="PR:Q7LL14"/>
<dbReference type="Proteomes" id="UP000002485">
    <property type="component" value="Chromosome II"/>
</dbReference>
<dbReference type="GO" id="GO:0005829">
    <property type="term" value="C:cytosol"/>
    <property type="evidence" value="ECO:0007005"/>
    <property type="project" value="PomBase"/>
</dbReference>
<dbReference type="GO" id="GO:0005634">
    <property type="term" value="C:nucleus"/>
    <property type="evidence" value="ECO:0007005"/>
    <property type="project" value="PomBase"/>
</dbReference>
<dbReference type="GO" id="GO:0005681">
    <property type="term" value="C:spliceosomal complex"/>
    <property type="evidence" value="ECO:0000314"/>
    <property type="project" value="PomBase"/>
</dbReference>
<dbReference type="GO" id="GO:0005686">
    <property type="term" value="C:U2 snRNP"/>
    <property type="evidence" value="ECO:0000314"/>
    <property type="project" value="PomBase"/>
</dbReference>
<dbReference type="GO" id="GO:0071004">
    <property type="term" value="C:U2-type prespliceosome"/>
    <property type="evidence" value="ECO:0000266"/>
    <property type="project" value="PomBase"/>
</dbReference>
<dbReference type="GO" id="GO:0030620">
    <property type="term" value="F:U2 snRNA binding"/>
    <property type="evidence" value="ECO:0000266"/>
    <property type="project" value="PomBase"/>
</dbReference>
<dbReference type="GO" id="GO:0045292">
    <property type="term" value="P:mRNA cis splicing, via spliceosome"/>
    <property type="evidence" value="ECO:0000266"/>
    <property type="project" value="PomBase"/>
</dbReference>
<dbReference type="CDD" id="cd12246">
    <property type="entry name" value="RRM1_U1A_like"/>
    <property type="match status" value="1"/>
</dbReference>
<dbReference type="FunFam" id="3.30.70.330:FF:000572">
    <property type="entry name" value="U1 small nuclear ribonucleoprotein A"/>
    <property type="match status" value="1"/>
</dbReference>
<dbReference type="Gene3D" id="3.30.70.330">
    <property type="match status" value="1"/>
</dbReference>
<dbReference type="InterPro" id="IPR012677">
    <property type="entry name" value="Nucleotide-bd_a/b_plait_sf"/>
</dbReference>
<dbReference type="InterPro" id="IPR035979">
    <property type="entry name" value="RBD_domain_sf"/>
</dbReference>
<dbReference type="InterPro" id="IPR000504">
    <property type="entry name" value="RRM_dom"/>
</dbReference>
<dbReference type="Pfam" id="PF00076">
    <property type="entry name" value="RRM_1"/>
    <property type="match status" value="1"/>
</dbReference>
<dbReference type="SMART" id="SM00360">
    <property type="entry name" value="RRM"/>
    <property type="match status" value="1"/>
</dbReference>
<dbReference type="SUPFAM" id="SSF54928">
    <property type="entry name" value="RNA-binding domain, RBD"/>
    <property type="match status" value="1"/>
</dbReference>
<dbReference type="PROSITE" id="PS50102">
    <property type="entry name" value="RRM"/>
    <property type="match status" value="1"/>
</dbReference>
<evidence type="ECO:0000250" key="1"/>
<evidence type="ECO:0000255" key="2">
    <source>
        <dbReference type="PROSITE-ProRule" id="PRU00176"/>
    </source>
</evidence>
<evidence type="ECO:0000269" key="3">
    <source>
    </source>
</evidence>
<evidence type="ECO:0000305" key="4"/>
<accession>Q7LL14</accession>
<accession>O13649</accession>
<comment type="function">
    <text evidence="1">Involved in pre-mRNA splicing. This protein is associated with snRNP U2. It binds stem loop IV of U2 snRNA (By similarity).</text>
</comment>
<comment type="subunit">
    <text evidence="3">Belongs to the 40S cdc5-associated complex (or cwf complex), a spliceosome sub-complex reminiscent of a late-stage spliceosome composed of the U2, U5 and U6 snRNAs and at least brr2, cdc5, cwf2/prp3, cwf3/syf1, cwf4/syf3, cwf5/ecm2, spp42/cwf6, cwf7/spf27, cwf8, cwf9, cwf10, cwf11, cwf12, prp45/cwf13, cwf14, cwf15, cwf16, cwf17, cwf18, cwf19, cwf20, cwf21, cwf22, cwf23, cwf24, cwf25, cwf26, cyp7/cwf27, cwf28, cwf29/ist3, lea1, msl1, prp5/cwf1, prp10, prp12/sap130, prp17, prp22, sap61, sap62, sap114, sap145, slu7, smb1, smd1, smd3, smf1, smg1 and syf2.</text>
</comment>
<comment type="subcellular location">
    <subcellularLocation>
        <location evidence="1">Nucleus</location>
    </subcellularLocation>
</comment>
<comment type="sequence caution" evidence="4">
    <conflict type="erroneous gene model prediction">
        <sequence resource="EMBL-CDS" id="BAA21437"/>
    </conflict>
</comment>
<sequence length="111" mass="12667">MNQNTLYVNNLNDKINKNDLRTALYMLFSTYGTVVDIVALKTPKMRGQAHVVFFDPSAAAIAMKALKNFIFFGKEMKIQYAHSKSKIIERIVAENDSRGPLKRLRDEADLE</sequence>
<keyword id="KW-0002">3D-structure</keyword>
<keyword id="KW-0507">mRNA processing</keyword>
<keyword id="KW-0508">mRNA splicing</keyword>
<keyword id="KW-0539">Nucleus</keyword>
<keyword id="KW-1185">Reference proteome</keyword>
<keyword id="KW-0687">Ribonucleoprotein</keyword>
<keyword id="KW-0694">RNA-binding</keyword>